<sequence length="234" mass="26383">MSKSFTFKQFHIDIGSCGMPVSTDGVLLGAWADIRACSQILDIGAGTGLLSLMSAQRNSDAHIDAIELMPIAADVARLNFYQSPWKERLTLIHHDFLTYQAPHKYDAIICNPPYFNNGEQSQKGERSTARHTDSLPFDKLLQHCKTLISPTGRASFILPVFEGELFIKVAKNDDFHLTKITKVKTTEKKSPTRLLIELSLFPHIYQESTLTIHDGNGYSDDFIKLTRTFYLNMD</sequence>
<comment type="function">
    <text evidence="1">Specifically methylates the adenine in position 37 of tRNA(1)(Val) (anticodon cmo5UAC).</text>
</comment>
<comment type="catalytic activity">
    <reaction evidence="1">
        <text>adenosine(37) in tRNA1(Val) + S-adenosyl-L-methionine = N(6)-methyladenosine(37) in tRNA1(Val) + S-adenosyl-L-homocysteine + H(+)</text>
        <dbReference type="Rhea" id="RHEA:43160"/>
        <dbReference type="Rhea" id="RHEA-COMP:10369"/>
        <dbReference type="Rhea" id="RHEA-COMP:10370"/>
        <dbReference type="ChEBI" id="CHEBI:15378"/>
        <dbReference type="ChEBI" id="CHEBI:57856"/>
        <dbReference type="ChEBI" id="CHEBI:59789"/>
        <dbReference type="ChEBI" id="CHEBI:74411"/>
        <dbReference type="ChEBI" id="CHEBI:74449"/>
        <dbReference type="EC" id="2.1.1.223"/>
    </reaction>
</comment>
<comment type="subcellular location">
    <subcellularLocation>
        <location evidence="1">Cytoplasm</location>
    </subcellularLocation>
</comment>
<comment type="similarity">
    <text evidence="1">Belongs to the methyltransferase superfamily. tRNA (adenine-N(6)-)-methyltransferase family.</text>
</comment>
<evidence type="ECO:0000255" key="1">
    <source>
        <dbReference type="HAMAP-Rule" id="MF_01872"/>
    </source>
</evidence>
<organism>
    <name type="scientific">Aliivibrio fischeri (strain ATCC 700601 / ES114)</name>
    <name type="common">Vibrio fischeri</name>
    <dbReference type="NCBI Taxonomy" id="312309"/>
    <lineage>
        <taxon>Bacteria</taxon>
        <taxon>Pseudomonadati</taxon>
        <taxon>Pseudomonadota</taxon>
        <taxon>Gammaproteobacteria</taxon>
        <taxon>Vibrionales</taxon>
        <taxon>Vibrionaceae</taxon>
        <taxon>Aliivibrio</taxon>
    </lineage>
</organism>
<dbReference type="EC" id="2.1.1.223" evidence="1"/>
<dbReference type="EMBL" id="CP000020">
    <property type="protein sequence ID" value="AAW84940.1"/>
    <property type="molecule type" value="Genomic_DNA"/>
</dbReference>
<dbReference type="RefSeq" id="WP_011261226.1">
    <property type="nucleotide sequence ID" value="NC_006840.2"/>
</dbReference>
<dbReference type="RefSeq" id="YP_203828.1">
    <property type="nucleotide sequence ID" value="NC_006840.2"/>
</dbReference>
<dbReference type="SMR" id="Q5E7Q6"/>
<dbReference type="STRING" id="312309.VF_0445"/>
<dbReference type="EnsemblBacteria" id="AAW84940">
    <property type="protein sequence ID" value="AAW84940"/>
    <property type="gene ID" value="VF_0445"/>
</dbReference>
<dbReference type="GeneID" id="54163082"/>
<dbReference type="KEGG" id="vfi:VF_0445"/>
<dbReference type="PATRIC" id="fig|312309.11.peg.435"/>
<dbReference type="eggNOG" id="COG4123">
    <property type="taxonomic scope" value="Bacteria"/>
</dbReference>
<dbReference type="HOGENOM" id="CLU_061983_0_0_6"/>
<dbReference type="OrthoDB" id="5383291at2"/>
<dbReference type="Proteomes" id="UP000000537">
    <property type="component" value="Chromosome I"/>
</dbReference>
<dbReference type="GO" id="GO:0005737">
    <property type="term" value="C:cytoplasm"/>
    <property type="evidence" value="ECO:0007669"/>
    <property type="project" value="UniProtKB-SubCell"/>
</dbReference>
<dbReference type="GO" id="GO:0003676">
    <property type="term" value="F:nucleic acid binding"/>
    <property type="evidence" value="ECO:0007669"/>
    <property type="project" value="InterPro"/>
</dbReference>
<dbReference type="GO" id="GO:0016430">
    <property type="term" value="F:tRNA (adenine-N6)-methyltransferase activity"/>
    <property type="evidence" value="ECO:0007669"/>
    <property type="project" value="UniProtKB-UniRule"/>
</dbReference>
<dbReference type="GO" id="GO:0032259">
    <property type="term" value="P:methylation"/>
    <property type="evidence" value="ECO:0007669"/>
    <property type="project" value="UniProtKB-KW"/>
</dbReference>
<dbReference type="GO" id="GO:0008033">
    <property type="term" value="P:tRNA processing"/>
    <property type="evidence" value="ECO:0007669"/>
    <property type="project" value="UniProtKB-UniRule"/>
</dbReference>
<dbReference type="CDD" id="cd02440">
    <property type="entry name" value="AdoMet_MTases"/>
    <property type="match status" value="1"/>
</dbReference>
<dbReference type="Gene3D" id="3.40.50.150">
    <property type="entry name" value="Vaccinia Virus protein VP39"/>
    <property type="match status" value="1"/>
</dbReference>
<dbReference type="HAMAP" id="MF_01872">
    <property type="entry name" value="tRNA_methyltr_YfiC"/>
    <property type="match status" value="1"/>
</dbReference>
<dbReference type="InterPro" id="IPR002052">
    <property type="entry name" value="DNA_methylase_N6_adenine_CS"/>
</dbReference>
<dbReference type="InterPro" id="IPR029063">
    <property type="entry name" value="SAM-dependent_MTases_sf"/>
</dbReference>
<dbReference type="InterPro" id="IPR007848">
    <property type="entry name" value="Small_mtfrase_dom"/>
</dbReference>
<dbReference type="InterPro" id="IPR050210">
    <property type="entry name" value="tRNA_Adenine-N(6)_MTase"/>
</dbReference>
<dbReference type="InterPro" id="IPR022882">
    <property type="entry name" value="tRNA_adenine-N6_MeTrfase"/>
</dbReference>
<dbReference type="PANTHER" id="PTHR47739">
    <property type="entry name" value="TRNA1(VAL) (ADENINE(37)-N6)-METHYLTRANSFERASE"/>
    <property type="match status" value="1"/>
</dbReference>
<dbReference type="PANTHER" id="PTHR47739:SF1">
    <property type="entry name" value="TRNA1(VAL) (ADENINE(37)-N6)-METHYLTRANSFERASE"/>
    <property type="match status" value="1"/>
</dbReference>
<dbReference type="Pfam" id="PF05175">
    <property type="entry name" value="MTS"/>
    <property type="match status" value="1"/>
</dbReference>
<dbReference type="PRINTS" id="PR00507">
    <property type="entry name" value="N12N6MTFRASE"/>
</dbReference>
<dbReference type="SUPFAM" id="SSF53335">
    <property type="entry name" value="S-adenosyl-L-methionine-dependent methyltransferases"/>
    <property type="match status" value="1"/>
</dbReference>
<dbReference type="PROSITE" id="PS00092">
    <property type="entry name" value="N6_MTASE"/>
    <property type="match status" value="1"/>
</dbReference>
<proteinExistence type="inferred from homology"/>
<reference key="1">
    <citation type="journal article" date="2005" name="Proc. Natl. Acad. Sci. U.S.A.">
        <title>Complete genome sequence of Vibrio fischeri: a symbiotic bacterium with pathogenic congeners.</title>
        <authorList>
            <person name="Ruby E.G."/>
            <person name="Urbanowski M."/>
            <person name="Campbell J."/>
            <person name="Dunn A."/>
            <person name="Faini M."/>
            <person name="Gunsalus R."/>
            <person name="Lostroh P."/>
            <person name="Lupp C."/>
            <person name="McCann J."/>
            <person name="Millikan D."/>
            <person name="Schaefer A."/>
            <person name="Stabb E."/>
            <person name="Stevens A."/>
            <person name="Visick K."/>
            <person name="Whistler C."/>
            <person name="Greenberg E.P."/>
        </authorList>
    </citation>
    <scope>NUCLEOTIDE SEQUENCE [LARGE SCALE GENOMIC DNA]</scope>
    <source>
        <strain>ATCC 700601 / ES114</strain>
    </source>
</reference>
<accession>Q5E7Q6</accession>
<feature type="chain" id="PRO_0000387443" description="tRNA1(Val) (adenine(37)-N6)-methyltransferase">
    <location>
        <begin position="1"/>
        <end position="234"/>
    </location>
</feature>
<name>TRMN6_ALIF1</name>
<protein>
    <recommendedName>
        <fullName evidence="1">tRNA1(Val) (adenine(37)-N6)-methyltransferase</fullName>
        <ecNumber evidence="1">2.1.1.223</ecNumber>
    </recommendedName>
    <alternativeName>
        <fullName evidence="1">tRNA m6A37 methyltransferase</fullName>
    </alternativeName>
</protein>
<keyword id="KW-0963">Cytoplasm</keyword>
<keyword id="KW-0489">Methyltransferase</keyword>
<keyword id="KW-1185">Reference proteome</keyword>
<keyword id="KW-0949">S-adenosyl-L-methionine</keyword>
<keyword id="KW-0808">Transferase</keyword>
<keyword id="KW-0819">tRNA processing</keyword>
<gene>
    <name type="ordered locus">VF_0445</name>
</gene>